<sequence>MIMRTSWVASRKGQSNVSQMYFARREVITEEMSFVAKKENLPESLIMEEVARGRMIIPANINHLNLEPMAIGIASSCKVNANIGASPNASDVNEELKKLHLAVKYGADTVMDLSTGGVNLDEVRTAIIQASPVPIGTVPVYQALESVHGSIEKLSEEDFLHIIEKHCQQGVDYQTIHAGLLIEHLPKVKGRLTGIVSRGGGILAQWMLYHHKQNPLFTRFDDICEIFKRYDCSFSLGDSLRPGCLHDASDEAQLAELKTLGELTQRAWKHDVQVMVEGPGHVPMDQIEFNVRKQMEDCLEAPFYVLGPLVTDIAPGYDHITSAIGAAMAGWYGTAMLCYVTPKEHLGLPNPEDVREGLIAYKIAAHAADIARHRSGARDRDDELSRARYAFDWNKQFELSLDPERAREYHDETLPADIYKQAEFCSMCGPKHCPMQTKITDKDLENLESILSSKGAKEINTMKLDKEV</sequence>
<feature type="chain" id="PRO_0000152822" description="Phosphomethylpyrimidine synthase">
    <location>
        <begin position="1"/>
        <end position="468"/>
    </location>
</feature>
<feature type="binding site" evidence="1">
    <location>
        <position position="82"/>
    </location>
    <ligand>
        <name>substrate</name>
    </ligand>
</feature>
<feature type="binding site" evidence="1">
    <location>
        <position position="111"/>
    </location>
    <ligand>
        <name>substrate</name>
    </ligand>
</feature>
<feature type="binding site" evidence="1">
    <location>
        <position position="141"/>
    </location>
    <ligand>
        <name>substrate</name>
    </ligand>
</feature>
<feature type="binding site" evidence="1">
    <location>
        <position position="177"/>
    </location>
    <ligand>
        <name>substrate</name>
    </ligand>
</feature>
<feature type="binding site" evidence="1">
    <location>
        <begin position="197"/>
        <end position="199"/>
    </location>
    <ligand>
        <name>substrate</name>
    </ligand>
</feature>
<feature type="binding site" evidence="1">
    <location>
        <begin position="238"/>
        <end position="241"/>
    </location>
    <ligand>
        <name>substrate</name>
    </ligand>
</feature>
<feature type="binding site" evidence="1">
    <location>
        <position position="277"/>
    </location>
    <ligand>
        <name>substrate</name>
    </ligand>
</feature>
<feature type="binding site" evidence="1">
    <location>
        <position position="281"/>
    </location>
    <ligand>
        <name>Zn(2+)</name>
        <dbReference type="ChEBI" id="CHEBI:29105"/>
    </ligand>
</feature>
<feature type="binding site" evidence="1">
    <location>
        <position position="304"/>
    </location>
    <ligand>
        <name>substrate</name>
    </ligand>
</feature>
<feature type="binding site" evidence="1">
    <location>
        <position position="345"/>
    </location>
    <ligand>
        <name>Zn(2+)</name>
        <dbReference type="ChEBI" id="CHEBI:29105"/>
    </ligand>
</feature>
<feature type="binding site" evidence="1">
    <location>
        <position position="425"/>
    </location>
    <ligand>
        <name>[4Fe-4S] cluster</name>
        <dbReference type="ChEBI" id="CHEBI:49883"/>
        <note>4Fe-4S-S-AdoMet</note>
    </ligand>
</feature>
<feature type="binding site" evidence="1">
    <location>
        <position position="428"/>
    </location>
    <ligand>
        <name>[4Fe-4S] cluster</name>
        <dbReference type="ChEBI" id="CHEBI:49883"/>
        <note>4Fe-4S-S-AdoMet</note>
    </ligand>
</feature>
<feature type="binding site" evidence="1">
    <location>
        <position position="433"/>
    </location>
    <ligand>
        <name>[4Fe-4S] cluster</name>
        <dbReference type="ChEBI" id="CHEBI:49883"/>
        <note>4Fe-4S-S-AdoMet</note>
    </ligand>
</feature>
<proteinExistence type="inferred from homology"/>
<evidence type="ECO:0000255" key="1">
    <source>
        <dbReference type="HAMAP-Rule" id="MF_00089"/>
    </source>
</evidence>
<dbReference type="EC" id="4.1.99.17" evidence="1"/>
<dbReference type="EMBL" id="AE017126">
    <property type="protein sequence ID" value="AAQ00815.1"/>
    <property type="molecule type" value="Genomic_DNA"/>
</dbReference>
<dbReference type="RefSeq" id="NP_876162.1">
    <property type="nucleotide sequence ID" value="NC_005042.1"/>
</dbReference>
<dbReference type="SMR" id="Q7V9Q8"/>
<dbReference type="STRING" id="167539.Pro_1771"/>
<dbReference type="EnsemblBacteria" id="AAQ00815">
    <property type="protein sequence ID" value="AAQ00815"/>
    <property type="gene ID" value="Pro_1771"/>
</dbReference>
<dbReference type="KEGG" id="pma:Pro_1771"/>
<dbReference type="PATRIC" id="fig|167539.5.peg.1871"/>
<dbReference type="eggNOG" id="COG0422">
    <property type="taxonomic scope" value="Bacteria"/>
</dbReference>
<dbReference type="HOGENOM" id="CLU_013181_2_1_3"/>
<dbReference type="OrthoDB" id="9805897at2"/>
<dbReference type="UniPathway" id="UPA00060"/>
<dbReference type="Proteomes" id="UP000001420">
    <property type="component" value="Chromosome"/>
</dbReference>
<dbReference type="GO" id="GO:0005829">
    <property type="term" value="C:cytosol"/>
    <property type="evidence" value="ECO:0007669"/>
    <property type="project" value="TreeGrafter"/>
</dbReference>
<dbReference type="GO" id="GO:0051539">
    <property type="term" value="F:4 iron, 4 sulfur cluster binding"/>
    <property type="evidence" value="ECO:0007669"/>
    <property type="project" value="UniProtKB-KW"/>
</dbReference>
<dbReference type="GO" id="GO:0016830">
    <property type="term" value="F:carbon-carbon lyase activity"/>
    <property type="evidence" value="ECO:0007669"/>
    <property type="project" value="InterPro"/>
</dbReference>
<dbReference type="GO" id="GO:0008270">
    <property type="term" value="F:zinc ion binding"/>
    <property type="evidence" value="ECO:0007669"/>
    <property type="project" value="UniProtKB-UniRule"/>
</dbReference>
<dbReference type="GO" id="GO:0009228">
    <property type="term" value="P:thiamine biosynthetic process"/>
    <property type="evidence" value="ECO:0007669"/>
    <property type="project" value="UniProtKB-KW"/>
</dbReference>
<dbReference type="GO" id="GO:0009229">
    <property type="term" value="P:thiamine diphosphate biosynthetic process"/>
    <property type="evidence" value="ECO:0007669"/>
    <property type="project" value="UniProtKB-UniRule"/>
</dbReference>
<dbReference type="FunFam" id="3.20.20.540:FF:000001">
    <property type="entry name" value="Phosphomethylpyrimidine synthase"/>
    <property type="match status" value="1"/>
</dbReference>
<dbReference type="Gene3D" id="6.10.250.620">
    <property type="match status" value="1"/>
</dbReference>
<dbReference type="Gene3D" id="3.20.20.540">
    <property type="entry name" value="Radical SAM ThiC family, central domain"/>
    <property type="match status" value="1"/>
</dbReference>
<dbReference type="HAMAP" id="MF_00089">
    <property type="entry name" value="ThiC"/>
    <property type="match status" value="1"/>
</dbReference>
<dbReference type="InterPro" id="IPR037509">
    <property type="entry name" value="ThiC"/>
</dbReference>
<dbReference type="InterPro" id="IPR038521">
    <property type="entry name" value="ThiC/Bza_core_dom"/>
</dbReference>
<dbReference type="InterPro" id="IPR002817">
    <property type="entry name" value="ThiC/BzaA/B"/>
</dbReference>
<dbReference type="NCBIfam" id="NF006763">
    <property type="entry name" value="PRK09284.1"/>
    <property type="match status" value="1"/>
</dbReference>
<dbReference type="NCBIfam" id="NF009895">
    <property type="entry name" value="PRK13352.1"/>
    <property type="match status" value="1"/>
</dbReference>
<dbReference type="NCBIfam" id="TIGR00190">
    <property type="entry name" value="thiC"/>
    <property type="match status" value="1"/>
</dbReference>
<dbReference type="PANTHER" id="PTHR30557:SF1">
    <property type="entry name" value="PHOSPHOMETHYLPYRIMIDINE SYNTHASE, CHLOROPLASTIC"/>
    <property type="match status" value="1"/>
</dbReference>
<dbReference type="PANTHER" id="PTHR30557">
    <property type="entry name" value="THIAMINE BIOSYNTHESIS PROTEIN THIC"/>
    <property type="match status" value="1"/>
</dbReference>
<dbReference type="Pfam" id="PF01964">
    <property type="entry name" value="ThiC_Rad_SAM"/>
    <property type="match status" value="1"/>
</dbReference>
<dbReference type="SFLD" id="SFLDF00407">
    <property type="entry name" value="phosphomethylpyrimidine_syntha"/>
    <property type="match status" value="1"/>
</dbReference>
<dbReference type="SFLD" id="SFLDG01114">
    <property type="entry name" value="phosphomethylpyrimidine_syntha"/>
    <property type="match status" value="1"/>
</dbReference>
<dbReference type="SFLD" id="SFLDS00113">
    <property type="entry name" value="Radical_SAM_Phosphomethylpyrim"/>
    <property type="match status" value="1"/>
</dbReference>
<protein>
    <recommendedName>
        <fullName evidence="1">Phosphomethylpyrimidine synthase</fullName>
        <ecNumber evidence="1">4.1.99.17</ecNumber>
    </recommendedName>
    <alternativeName>
        <fullName evidence="1">Hydroxymethylpyrimidine phosphate synthase</fullName>
        <shortName evidence="1">HMP-P synthase</shortName>
        <shortName evidence="1">HMP-phosphate synthase</shortName>
        <shortName evidence="1">HMPP synthase</shortName>
    </alternativeName>
    <alternativeName>
        <fullName evidence="1">Thiamine biosynthesis protein ThiC</fullName>
    </alternativeName>
</protein>
<gene>
    <name evidence="1" type="primary">thiC</name>
    <name type="ordered locus">Pro_1771</name>
</gene>
<name>THIC_PROMA</name>
<reference key="1">
    <citation type="journal article" date="2003" name="Proc. Natl. Acad. Sci. U.S.A.">
        <title>Genome sequence of the cyanobacterium Prochlorococcus marinus SS120, a nearly minimal oxyphototrophic genome.</title>
        <authorList>
            <person name="Dufresne A."/>
            <person name="Salanoubat M."/>
            <person name="Partensky F."/>
            <person name="Artiguenave F."/>
            <person name="Axmann I.M."/>
            <person name="Barbe V."/>
            <person name="Duprat S."/>
            <person name="Galperin M.Y."/>
            <person name="Koonin E.V."/>
            <person name="Le Gall F."/>
            <person name="Makarova K.S."/>
            <person name="Ostrowski M."/>
            <person name="Oztas S."/>
            <person name="Robert C."/>
            <person name="Rogozin I.B."/>
            <person name="Scanlan D.J."/>
            <person name="Tandeau de Marsac N."/>
            <person name="Weissenbach J."/>
            <person name="Wincker P."/>
            <person name="Wolf Y.I."/>
            <person name="Hess W.R."/>
        </authorList>
    </citation>
    <scope>NUCLEOTIDE SEQUENCE [LARGE SCALE GENOMIC DNA]</scope>
    <source>
        <strain>SARG / CCMP1375 / SS120</strain>
    </source>
</reference>
<organism>
    <name type="scientific">Prochlorococcus marinus (strain SARG / CCMP1375 / SS120)</name>
    <dbReference type="NCBI Taxonomy" id="167539"/>
    <lineage>
        <taxon>Bacteria</taxon>
        <taxon>Bacillati</taxon>
        <taxon>Cyanobacteriota</taxon>
        <taxon>Cyanophyceae</taxon>
        <taxon>Synechococcales</taxon>
        <taxon>Prochlorococcaceae</taxon>
        <taxon>Prochlorococcus</taxon>
    </lineage>
</organism>
<keyword id="KW-0004">4Fe-4S</keyword>
<keyword id="KW-0408">Iron</keyword>
<keyword id="KW-0411">Iron-sulfur</keyword>
<keyword id="KW-0456">Lyase</keyword>
<keyword id="KW-0479">Metal-binding</keyword>
<keyword id="KW-1185">Reference proteome</keyword>
<keyword id="KW-0949">S-adenosyl-L-methionine</keyword>
<keyword id="KW-0784">Thiamine biosynthesis</keyword>
<keyword id="KW-0862">Zinc</keyword>
<comment type="function">
    <text evidence="1">Catalyzes the synthesis of the hydroxymethylpyrimidine phosphate (HMP-P) moiety of thiamine from aminoimidazole ribotide (AIR) in a radical S-adenosyl-L-methionine (SAM)-dependent reaction.</text>
</comment>
<comment type="catalytic activity">
    <reaction evidence="1">
        <text>5-amino-1-(5-phospho-beta-D-ribosyl)imidazole + S-adenosyl-L-methionine = 4-amino-2-methyl-5-(phosphooxymethyl)pyrimidine + CO + 5'-deoxyadenosine + formate + L-methionine + 3 H(+)</text>
        <dbReference type="Rhea" id="RHEA:24840"/>
        <dbReference type="ChEBI" id="CHEBI:15378"/>
        <dbReference type="ChEBI" id="CHEBI:15740"/>
        <dbReference type="ChEBI" id="CHEBI:17245"/>
        <dbReference type="ChEBI" id="CHEBI:17319"/>
        <dbReference type="ChEBI" id="CHEBI:57844"/>
        <dbReference type="ChEBI" id="CHEBI:58354"/>
        <dbReference type="ChEBI" id="CHEBI:59789"/>
        <dbReference type="ChEBI" id="CHEBI:137981"/>
        <dbReference type="EC" id="4.1.99.17"/>
    </reaction>
</comment>
<comment type="cofactor">
    <cofactor evidence="1">
        <name>[4Fe-4S] cluster</name>
        <dbReference type="ChEBI" id="CHEBI:49883"/>
    </cofactor>
    <text evidence="1">Binds 1 [4Fe-4S] cluster per subunit. The cluster is coordinated with 3 cysteines and an exchangeable S-adenosyl-L-methionine.</text>
</comment>
<comment type="pathway">
    <text evidence="1">Cofactor biosynthesis; thiamine diphosphate biosynthesis.</text>
</comment>
<comment type="similarity">
    <text evidence="1">Belongs to the ThiC family.</text>
</comment>
<accession>Q7V9Q8</accession>